<feature type="chain" id="PRO_0000104648" description="Large ribosomal subunit protein uL30B">
    <location>
        <begin position="1"/>
        <end position="250"/>
    </location>
</feature>
<feature type="helix" evidence="4">
    <location>
        <begin position="17"/>
        <end position="79"/>
    </location>
</feature>
<feature type="strand" evidence="4">
    <location>
        <begin position="82"/>
        <end position="84"/>
    </location>
</feature>
<feature type="strand" evidence="4">
    <location>
        <begin position="90"/>
        <end position="95"/>
    </location>
</feature>
<feature type="strand" evidence="4">
    <location>
        <begin position="99"/>
        <end position="101"/>
    </location>
</feature>
<feature type="helix" evidence="4">
    <location>
        <begin position="104"/>
        <end position="112"/>
    </location>
</feature>
<feature type="strand" evidence="4">
    <location>
        <begin position="120"/>
        <end position="125"/>
    </location>
</feature>
<feature type="helix" evidence="4">
    <location>
        <begin position="128"/>
        <end position="136"/>
    </location>
</feature>
<feature type="helix" evidence="4">
    <location>
        <begin position="138"/>
        <end position="140"/>
    </location>
</feature>
<feature type="strand" evidence="4">
    <location>
        <begin position="141"/>
        <end position="144"/>
    </location>
</feature>
<feature type="helix" evidence="4">
    <location>
        <begin position="148"/>
        <end position="157"/>
    </location>
</feature>
<feature type="strand" evidence="4">
    <location>
        <begin position="160"/>
        <end position="163"/>
    </location>
</feature>
<feature type="strand" evidence="4">
    <location>
        <begin position="166"/>
        <end position="169"/>
    </location>
</feature>
<feature type="helix" evidence="4">
    <location>
        <begin position="173"/>
        <end position="180"/>
    </location>
</feature>
<feature type="turn" evidence="4">
    <location>
        <begin position="181"/>
        <end position="184"/>
    </location>
</feature>
<feature type="helix" evidence="4">
    <location>
        <begin position="188"/>
        <end position="197"/>
    </location>
</feature>
<feature type="helix" evidence="4">
    <location>
        <begin position="202"/>
        <end position="208"/>
    </location>
</feature>
<feature type="strand" evidence="4">
    <location>
        <begin position="223"/>
        <end position="228"/>
    </location>
</feature>
<feature type="turn" evidence="4">
    <location>
        <begin position="229"/>
        <end position="232"/>
    </location>
</feature>
<feature type="strand" evidence="4">
    <location>
        <begin position="233"/>
        <end position="237"/>
    </location>
</feature>
<feature type="helix" evidence="4">
    <location>
        <begin position="241"/>
        <end position="249"/>
    </location>
</feature>
<reference key="1">
    <citation type="journal article" date="1991" name="Nucleic Acids Res.">
        <title>Identification of a gene encoding the predicted ribosomal protein L7b divergently transcribed from POL1 in fission yeast Schizosaccharomyces pombe.</title>
        <authorList>
            <person name="Damagnez V."/>
            <person name="Recondo A.M."/>
            <person name="Baldacci G."/>
        </authorList>
    </citation>
    <scope>NUCLEOTIDE SEQUENCE [GENOMIC DNA]</scope>
</reference>
<reference key="2">
    <citation type="journal article" date="2002" name="Nature">
        <title>The genome sequence of Schizosaccharomyces pombe.</title>
        <authorList>
            <person name="Wood V."/>
            <person name="Gwilliam R."/>
            <person name="Rajandream M.A."/>
            <person name="Lyne M.H."/>
            <person name="Lyne R."/>
            <person name="Stewart A."/>
            <person name="Sgouros J.G."/>
            <person name="Peat N."/>
            <person name="Hayles J."/>
            <person name="Baker S.G."/>
            <person name="Basham D."/>
            <person name="Bowman S."/>
            <person name="Brooks K."/>
            <person name="Brown D."/>
            <person name="Brown S."/>
            <person name="Chillingworth T."/>
            <person name="Churcher C.M."/>
            <person name="Collins M."/>
            <person name="Connor R."/>
            <person name="Cronin A."/>
            <person name="Davis P."/>
            <person name="Feltwell T."/>
            <person name="Fraser A."/>
            <person name="Gentles S."/>
            <person name="Goble A."/>
            <person name="Hamlin N."/>
            <person name="Harris D.E."/>
            <person name="Hidalgo J."/>
            <person name="Hodgson G."/>
            <person name="Holroyd S."/>
            <person name="Hornsby T."/>
            <person name="Howarth S."/>
            <person name="Huckle E.J."/>
            <person name="Hunt S."/>
            <person name="Jagels K."/>
            <person name="James K.D."/>
            <person name="Jones L."/>
            <person name="Jones M."/>
            <person name="Leather S."/>
            <person name="McDonald S."/>
            <person name="McLean J."/>
            <person name="Mooney P."/>
            <person name="Moule S."/>
            <person name="Mungall K.L."/>
            <person name="Murphy L.D."/>
            <person name="Niblett D."/>
            <person name="Odell C."/>
            <person name="Oliver K."/>
            <person name="O'Neil S."/>
            <person name="Pearson D."/>
            <person name="Quail M.A."/>
            <person name="Rabbinowitsch E."/>
            <person name="Rutherford K.M."/>
            <person name="Rutter S."/>
            <person name="Saunders D."/>
            <person name="Seeger K."/>
            <person name="Sharp S."/>
            <person name="Skelton J."/>
            <person name="Simmonds M.N."/>
            <person name="Squares R."/>
            <person name="Squares S."/>
            <person name="Stevens K."/>
            <person name="Taylor K."/>
            <person name="Taylor R.G."/>
            <person name="Tivey A."/>
            <person name="Walsh S.V."/>
            <person name="Warren T."/>
            <person name="Whitehead S."/>
            <person name="Woodward J.R."/>
            <person name="Volckaert G."/>
            <person name="Aert R."/>
            <person name="Robben J."/>
            <person name="Grymonprez B."/>
            <person name="Weltjens I."/>
            <person name="Vanstreels E."/>
            <person name="Rieger M."/>
            <person name="Schaefer M."/>
            <person name="Mueller-Auer S."/>
            <person name="Gabel C."/>
            <person name="Fuchs M."/>
            <person name="Duesterhoeft A."/>
            <person name="Fritzc C."/>
            <person name="Holzer E."/>
            <person name="Moestl D."/>
            <person name="Hilbert H."/>
            <person name="Borzym K."/>
            <person name="Langer I."/>
            <person name="Beck A."/>
            <person name="Lehrach H."/>
            <person name="Reinhardt R."/>
            <person name="Pohl T.M."/>
            <person name="Eger P."/>
            <person name="Zimmermann W."/>
            <person name="Wedler H."/>
            <person name="Wambutt R."/>
            <person name="Purnelle B."/>
            <person name="Goffeau A."/>
            <person name="Cadieu E."/>
            <person name="Dreano S."/>
            <person name="Gloux S."/>
            <person name="Lelaure V."/>
            <person name="Mottier S."/>
            <person name="Galibert F."/>
            <person name="Aves S.J."/>
            <person name="Xiang Z."/>
            <person name="Hunt C."/>
            <person name="Moore K."/>
            <person name="Hurst S.M."/>
            <person name="Lucas M."/>
            <person name="Rochet M."/>
            <person name="Gaillardin C."/>
            <person name="Tallada V.A."/>
            <person name="Garzon A."/>
            <person name="Thode G."/>
            <person name="Daga R.R."/>
            <person name="Cruzado L."/>
            <person name="Jimenez J."/>
            <person name="Sanchez M."/>
            <person name="del Rey F."/>
            <person name="Benito J."/>
            <person name="Dominguez A."/>
            <person name="Revuelta J.L."/>
            <person name="Moreno S."/>
            <person name="Armstrong J."/>
            <person name="Forsburg S.L."/>
            <person name="Cerutti L."/>
            <person name="Lowe T."/>
            <person name="McCombie W.R."/>
            <person name="Paulsen I."/>
            <person name="Potashkin J."/>
            <person name="Shpakovski G.V."/>
            <person name="Ussery D."/>
            <person name="Barrell B.G."/>
            <person name="Nurse P."/>
        </authorList>
    </citation>
    <scope>NUCLEOTIDE SEQUENCE [LARGE SCALE GENOMIC DNA]</scope>
    <source>
        <strain>972 / ATCC 24843</strain>
    </source>
</reference>
<reference key="3">
    <citation type="journal article" date="2006" name="Nat. Biotechnol.">
        <title>ORFeome cloning and global analysis of protein localization in the fission yeast Schizosaccharomyces pombe.</title>
        <authorList>
            <person name="Matsuyama A."/>
            <person name="Arai R."/>
            <person name="Yashiroda Y."/>
            <person name="Shirai A."/>
            <person name="Kamata A."/>
            <person name="Sekido S."/>
            <person name="Kobayashi Y."/>
            <person name="Hashimoto A."/>
            <person name="Hamamoto M."/>
            <person name="Hiraoka Y."/>
            <person name="Horinouchi S."/>
            <person name="Yoshida M."/>
        </authorList>
    </citation>
    <scope>SUBCELLULAR LOCATION [LARGE SCALE ANALYSIS]</scope>
</reference>
<gene>
    <name type="primary">rpl702</name>
    <name type="synonym">rpl7b</name>
    <name type="ORF">SPAC3H5.07</name>
</gene>
<comment type="function">
    <text evidence="1">Component of the ribosome, a large ribonucleoprotein complex responsible for the synthesis of proteins in the cell. The small ribosomal subunit (SSU) binds messenger RNAs (mRNAs) and translates the encoded message by selecting cognate aminoacyl-transfer RNA (tRNA) molecules. The large subunit (LSU) contains the ribosomal catalytic site termed the peptidyl transferase center (PTC), which catalyzes the formation of peptide bonds, thereby polymerizing the amino acids delivered by tRNAs into a polypeptide chain. The nascent polypeptides leave the ribosome through a tunnel in the LSU and interact with protein factors that function in enzymatic processing, targeting, and the membrane insertion of nascent chains at the exit of the ribosomal tunnel.</text>
</comment>
<comment type="subunit">
    <text evidence="1">Component of the large ribosomal subunit (LSU). Mature yeast ribosomes consist of a small (40S) and a large (60S) subunit. The 40S small subunit contains 1 molecule of ribosomal RNA (18S rRNA) and at least 33 different proteins. The large 60S subunit contains 3 rRNA molecules (25S, 5.8S and 5S rRNA) and at least 46 different proteins.</text>
</comment>
<comment type="subcellular location">
    <subcellularLocation>
        <location evidence="2">Cytoplasm</location>
    </subcellularLocation>
    <subcellularLocation>
        <location evidence="2">Nucleus</location>
        <location evidence="2">Nucleolus</location>
    </subcellularLocation>
</comment>
<comment type="miscellaneous">
    <text>There are 3 genes for uL30 in S.pombe.</text>
</comment>
<comment type="similarity">
    <text evidence="3">Belongs to the universal ribosomal protein uL30 family.</text>
</comment>
<keyword id="KW-0002">3D-structure</keyword>
<keyword id="KW-0963">Cytoplasm</keyword>
<keyword id="KW-0539">Nucleus</keyword>
<keyword id="KW-1185">Reference proteome</keyword>
<keyword id="KW-0687">Ribonucleoprotein</keyword>
<keyword id="KW-0689">Ribosomal protein</keyword>
<sequence length="250" mass="28449">MVASSTVPSVASIFAPESLLKKTKAQKQSREQIVAAAAEKKSARQKKRELIAKRAEAYEAEYRAAEREQIELARKARAEGNYFVPHEPKLIFVVRIRGINNIPPKARKIMQLLRLLQINNGIFVKFNKAIKEMLQVVEPYVTYGIPNHKTVRELIYKRGFGKVNKQRIPLSDNAIIEAALGKYSILSVEDLIHEIYTVGPNFKQAANFLWPFKLSSPLGGWRERKFKHFIEGGDAGKRDEHINGLVQKML</sequence>
<name>RL7B_SCHPO</name>
<accession>P25457</accession>
<evidence type="ECO:0000250" key="1">
    <source>
        <dbReference type="UniProtKB" id="Q12213"/>
    </source>
</evidence>
<evidence type="ECO:0000269" key="2">
    <source>
    </source>
</evidence>
<evidence type="ECO:0000305" key="3"/>
<evidence type="ECO:0007829" key="4">
    <source>
        <dbReference type="PDB" id="8EUY"/>
    </source>
</evidence>
<protein>
    <recommendedName>
        <fullName evidence="3">Large ribosomal subunit protein uL30B</fullName>
    </recommendedName>
    <alternativeName>
        <fullName>60S ribosomal protein L7-B</fullName>
    </alternativeName>
</protein>
<organism>
    <name type="scientific">Schizosaccharomyces pombe (strain 972 / ATCC 24843)</name>
    <name type="common">Fission yeast</name>
    <dbReference type="NCBI Taxonomy" id="284812"/>
    <lineage>
        <taxon>Eukaryota</taxon>
        <taxon>Fungi</taxon>
        <taxon>Dikarya</taxon>
        <taxon>Ascomycota</taxon>
        <taxon>Taphrinomycotina</taxon>
        <taxon>Schizosaccharomycetes</taxon>
        <taxon>Schizosaccharomycetales</taxon>
        <taxon>Schizosaccharomycetaceae</taxon>
        <taxon>Schizosaccharomyces</taxon>
    </lineage>
</organism>
<proteinExistence type="evidence at protein level"/>
<dbReference type="EMBL" id="X54983">
    <property type="protein sequence ID" value="CAA38729.1"/>
    <property type="molecule type" value="Genomic_DNA"/>
</dbReference>
<dbReference type="EMBL" id="CU329670">
    <property type="protein sequence ID" value="CAB16592.1"/>
    <property type="molecule type" value="Genomic_DNA"/>
</dbReference>
<dbReference type="PIR" id="S25067">
    <property type="entry name" value="S25067"/>
</dbReference>
<dbReference type="RefSeq" id="NP_594185.1">
    <property type="nucleotide sequence ID" value="NM_001019609.2"/>
</dbReference>
<dbReference type="PDB" id="8ESQ">
    <property type="method" value="EM"/>
    <property type="resolution" value="2.80 A"/>
    <property type="chains" value="F=1-250"/>
</dbReference>
<dbReference type="PDB" id="8ESR">
    <property type="method" value="EM"/>
    <property type="resolution" value="3.20 A"/>
    <property type="chains" value="F=1-250"/>
</dbReference>
<dbReference type="PDB" id="8ETC">
    <property type="method" value="EM"/>
    <property type="resolution" value="3.10 A"/>
    <property type="chains" value="F=1-250"/>
</dbReference>
<dbReference type="PDB" id="8ETG">
    <property type="method" value="EM"/>
    <property type="resolution" value="3.40 A"/>
    <property type="chains" value="F=1-250"/>
</dbReference>
<dbReference type="PDB" id="8ETH">
    <property type="method" value="EM"/>
    <property type="resolution" value="3.80 A"/>
    <property type="chains" value="F=1-250"/>
</dbReference>
<dbReference type="PDB" id="8ETI">
    <property type="method" value="EM"/>
    <property type="resolution" value="3.70 A"/>
    <property type="chains" value="F=1-250"/>
</dbReference>
<dbReference type="PDB" id="8ETJ">
    <property type="method" value="EM"/>
    <property type="resolution" value="3.20 A"/>
    <property type="chains" value="F=1-250"/>
</dbReference>
<dbReference type="PDB" id="8EUG">
    <property type="method" value="EM"/>
    <property type="resolution" value="2.80 A"/>
    <property type="chains" value="F=1-250"/>
</dbReference>
<dbReference type="PDB" id="8EUI">
    <property type="method" value="EM"/>
    <property type="resolution" value="3.10 A"/>
    <property type="chains" value="F=1-250"/>
</dbReference>
<dbReference type="PDB" id="8EUP">
    <property type="method" value="EM"/>
    <property type="resolution" value="3.10 A"/>
    <property type="chains" value="F=1-250"/>
</dbReference>
<dbReference type="PDB" id="8EUY">
    <property type="method" value="EM"/>
    <property type="resolution" value="3.00 A"/>
    <property type="chains" value="F=1-250"/>
</dbReference>
<dbReference type="PDB" id="8EV3">
    <property type="method" value="EM"/>
    <property type="resolution" value="3.00 A"/>
    <property type="chains" value="F=1-250"/>
</dbReference>
<dbReference type="PDBsum" id="8ESQ"/>
<dbReference type="PDBsum" id="8ESR"/>
<dbReference type="PDBsum" id="8ETC"/>
<dbReference type="PDBsum" id="8ETG"/>
<dbReference type="PDBsum" id="8ETH"/>
<dbReference type="PDBsum" id="8ETI"/>
<dbReference type="PDBsum" id="8ETJ"/>
<dbReference type="PDBsum" id="8EUG"/>
<dbReference type="PDBsum" id="8EUI"/>
<dbReference type="PDBsum" id="8EUP"/>
<dbReference type="PDBsum" id="8EUY"/>
<dbReference type="PDBsum" id="8EV3"/>
<dbReference type="SMR" id="P25457"/>
<dbReference type="BioGRID" id="279868">
    <property type="interactions" value="57"/>
</dbReference>
<dbReference type="FunCoup" id="P25457">
    <property type="interactions" value="517"/>
</dbReference>
<dbReference type="STRING" id="284812.P25457"/>
<dbReference type="iPTMnet" id="P25457"/>
<dbReference type="PaxDb" id="4896-SPAC3H5.07.1"/>
<dbReference type="EnsemblFungi" id="SPAC3H5.07.1">
    <property type="protein sequence ID" value="SPAC3H5.07.1:pep"/>
    <property type="gene ID" value="SPAC3H5.07"/>
</dbReference>
<dbReference type="GeneID" id="2543448"/>
<dbReference type="KEGG" id="spo:2543448"/>
<dbReference type="PomBase" id="SPAC3H5.07">
    <property type="gene designation" value="rpl702"/>
</dbReference>
<dbReference type="VEuPathDB" id="FungiDB:SPAC3H5.07"/>
<dbReference type="eggNOG" id="KOG3184">
    <property type="taxonomic scope" value="Eukaryota"/>
</dbReference>
<dbReference type="HOGENOM" id="CLU_055156_0_0_1"/>
<dbReference type="InParanoid" id="P25457"/>
<dbReference type="OMA" id="SYYVDAQ"/>
<dbReference type="PhylomeDB" id="P25457"/>
<dbReference type="PRO" id="PR:P25457"/>
<dbReference type="Proteomes" id="UP000002485">
    <property type="component" value="Chromosome I"/>
</dbReference>
<dbReference type="GO" id="GO:0005737">
    <property type="term" value="C:cytoplasm"/>
    <property type="evidence" value="ECO:0007005"/>
    <property type="project" value="PomBase"/>
</dbReference>
<dbReference type="GO" id="GO:0022625">
    <property type="term" value="C:cytosolic large ribosomal subunit"/>
    <property type="evidence" value="ECO:0000266"/>
    <property type="project" value="PomBase"/>
</dbReference>
<dbReference type="GO" id="GO:0005730">
    <property type="term" value="C:nucleolus"/>
    <property type="evidence" value="ECO:0007005"/>
    <property type="project" value="PomBase"/>
</dbReference>
<dbReference type="GO" id="GO:0030684">
    <property type="term" value="C:preribosome"/>
    <property type="evidence" value="ECO:0000314"/>
    <property type="project" value="PomBase"/>
</dbReference>
<dbReference type="GO" id="GO:0003723">
    <property type="term" value="F:RNA binding"/>
    <property type="evidence" value="ECO:0000318"/>
    <property type="project" value="GO_Central"/>
</dbReference>
<dbReference type="GO" id="GO:0003735">
    <property type="term" value="F:structural constituent of ribosome"/>
    <property type="evidence" value="ECO:0000266"/>
    <property type="project" value="PomBase"/>
</dbReference>
<dbReference type="GO" id="GO:0002181">
    <property type="term" value="P:cytoplasmic translation"/>
    <property type="evidence" value="ECO:0000266"/>
    <property type="project" value="PomBase"/>
</dbReference>
<dbReference type="GO" id="GO:0000463">
    <property type="term" value="P:maturation of LSU-rRNA from tricistronic rRNA transcript (SSU-rRNA, 5.8S rRNA, LSU-rRNA)"/>
    <property type="evidence" value="ECO:0000318"/>
    <property type="project" value="GO_Central"/>
</dbReference>
<dbReference type="CDD" id="cd01657">
    <property type="entry name" value="Ribosomal_L7_archeal_euk"/>
    <property type="match status" value="1"/>
</dbReference>
<dbReference type="FunFam" id="1.10.15.30:FF:000001">
    <property type="entry name" value="60S ribosomal protein L7"/>
    <property type="match status" value="1"/>
</dbReference>
<dbReference type="FunFam" id="3.30.1390.20:FF:000002">
    <property type="entry name" value="60S ribosomal protein L7"/>
    <property type="match status" value="1"/>
</dbReference>
<dbReference type="FunFam" id="3.30.1390.20:FF:000003">
    <property type="entry name" value="60S ribosomal protein L7"/>
    <property type="match status" value="1"/>
</dbReference>
<dbReference type="Gene3D" id="3.30.1390.20">
    <property type="entry name" value="Ribosomal protein L30, ferredoxin-like fold domain"/>
    <property type="match status" value="2"/>
</dbReference>
<dbReference type="InterPro" id="IPR036919">
    <property type="entry name" value="Ribo_uL30_ferredoxin-like_sf"/>
</dbReference>
<dbReference type="InterPro" id="IPR039699">
    <property type="entry name" value="Ribosomal_uL30"/>
</dbReference>
<dbReference type="InterPro" id="IPR018038">
    <property type="entry name" value="Ribosomal_uL30_CS"/>
</dbReference>
<dbReference type="InterPro" id="IPR005998">
    <property type="entry name" value="Ribosomal_uL30_euk"/>
</dbReference>
<dbReference type="InterPro" id="IPR035808">
    <property type="entry name" value="Ribosomal_uL30_euk_arc"/>
</dbReference>
<dbReference type="InterPro" id="IPR016082">
    <property type="entry name" value="Ribosomal_uL30_ferredoxin-like"/>
</dbReference>
<dbReference type="InterPro" id="IPR012988">
    <property type="entry name" value="Ribosomal_uL30_N_euk"/>
</dbReference>
<dbReference type="NCBIfam" id="TIGR01310">
    <property type="entry name" value="uL30_euk"/>
    <property type="match status" value="1"/>
</dbReference>
<dbReference type="PANTHER" id="PTHR11524">
    <property type="entry name" value="60S RIBOSOMAL PROTEIN L7"/>
    <property type="match status" value="1"/>
</dbReference>
<dbReference type="PANTHER" id="PTHR11524:SF16">
    <property type="entry name" value="LARGE RIBOSOMAL SUBUNIT PROTEIN UL30"/>
    <property type="match status" value="1"/>
</dbReference>
<dbReference type="Pfam" id="PF00327">
    <property type="entry name" value="Ribosomal_L30"/>
    <property type="match status" value="1"/>
</dbReference>
<dbReference type="Pfam" id="PF08079">
    <property type="entry name" value="Ribosomal_L30_N"/>
    <property type="match status" value="1"/>
</dbReference>
<dbReference type="SUPFAM" id="SSF55129">
    <property type="entry name" value="Ribosomal protein L30p/L7e"/>
    <property type="match status" value="1"/>
</dbReference>
<dbReference type="PROSITE" id="PS00634">
    <property type="entry name" value="RIBOSOMAL_L30"/>
    <property type="match status" value="1"/>
</dbReference>